<dbReference type="EMBL" id="AP000423">
    <property type="protein sequence ID" value="BAA84399.1"/>
    <property type="molecule type" value="Genomic_DNA"/>
</dbReference>
<dbReference type="EMBL" id="Z35152">
    <property type="protein sequence ID" value="CAA84523.1"/>
    <property type="molecule type" value="mRNA"/>
</dbReference>
<dbReference type="EMBL" id="Z34941">
    <property type="protein sequence ID" value="CAA84407.1"/>
    <property type="molecule type" value="mRNA"/>
</dbReference>
<dbReference type="RefSeq" id="NP_051073.1">
    <property type="nucleotide sequence ID" value="NC_000932.1"/>
</dbReference>
<dbReference type="SMR" id="P56781"/>
<dbReference type="FunCoup" id="P56781">
    <property type="interactions" value="39"/>
</dbReference>
<dbReference type="STRING" id="3702.P56781"/>
<dbReference type="TCDB" id="3.E.2.2.3">
    <property type="family name" value="the photosynthetic reaction center (prc) family"/>
</dbReference>
<dbReference type="PaxDb" id="3702-ATCG00550.1"/>
<dbReference type="EnsemblPlants" id="ATCG00550.1">
    <property type="protein sequence ID" value="ATCG00550.1"/>
    <property type="gene ID" value="ATCG00550"/>
</dbReference>
<dbReference type="GeneID" id="844749"/>
<dbReference type="Gramene" id="ATCG00550.1">
    <property type="protein sequence ID" value="ATCG00550.1"/>
    <property type="gene ID" value="ATCG00550"/>
</dbReference>
<dbReference type="KEGG" id="ath:ArthCp036"/>
<dbReference type="Araport" id="ATCG00550"/>
<dbReference type="TAIR" id="ATCG00550">
    <property type="gene designation" value="PSBJ"/>
</dbReference>
<dbReference type="eggNOG" id="ENOG502SBI8">
    <property type="taxonomic scope" value="Eukaryota"/>
</dbReference>
<dbReference type="HOGENOM" id="CLU_215151_0_0_1"/>
<dbReference type="InParanoid" id="P56781"/>
<dbReference type="PRO" id="PR:P56781"/>
<dbReference type="Proteomes" id="UP000006548">
    <property type="component" value="Chloroplast Pltd"/>
</dbReference>
<dbReference type="ExpressionAtlas" id="P56781">
    <property type="expression patterns" value="baseline and differential"/>
</dbReference>
<dbReference type="GO" id="GO:0009535">
    <property type="term" value="C:chloroplast thylakoid membrane"/>
    <property type="evidence" value="ECO:0007669"/>
    <property type="project" value="UniProtKB-SubCell"/>
</dbReference>
<dbReference type="GO" id="GO:0009539">
    <property type="term" value="C:photosystem II reaction center"/>
    <property type="evidence" value="ECO:0007669"/>
    <property type="project" value="InterPro"/>
</dbReference>
<dbReference type="GO" id="GO:0015979">
    <property type="term" value="P:photosynthesis"/>
    <property type="evidence" value="ECO:0007669"/>
    <property type="project" value="UniProtKB-UniRule"/>
</dbReference>
<dbReference type="Gene3D" id="6.10.250.2070">
    <property type="match status" value="1"/>
</dbReference>
<dbReference type="HAMAP" id="MF_01305">
    <property type="entry name" value="PSII_PsbJ"/>
    <property type="match status" value="1"/>
</dbReference>
<dbReference type="InterPro" id="IPR002682">
    <property type="entry name" value="PSII_PsbJ"/>
</dbReference>
<dbReference type="InterPro" id="IPR037267">
    <property type="entry name" value="PSII_PsbJ_sf"/>
</dbReference>
<dbReference type="NCBIfam" id="NF002722">
    <property type="entry name" value="PRK02565.1"/>
    <property type="match status" value="1"/>
</dbReference>
<dbReference type="PANTHER" id="PTHR34812">
    <property type="entry name" value="PHOTOSYSTEM II REACTION CENTER PROTEIN J"/>
    <property type="match status" value="1"/>
</dbReference>
<dbReference type="PANTHER" id="PTHR34812:SF3">
    <property type="entry name" value="PHOTOSYSTEM II REACTION CENTER PROTEIN J"/>
    <property type="match status" value="1"/>
</dbReference>
<dbReference type="Pfam" id="PF01788">
    <property type="entry name" value="PsbJ"/>
    <property type="match status" value="1"/>
</dbReference>
<dbReference type="SUPFAM" id="SSF161021">
    <property type="entry name" value="Photosystem II reaction center protein J, PsbJ"/>
    <property type="match status" value="1"/>
</dbReference>
<name>PSBJ_ARATH</name>
<sequence length="40" mass="4117">MADTTGRIPLWVIGTVAGILVIGLIGIFFYGSYSGLGSSL</sequence>
<keyword id="KW-0150">Chloroplast</keyword>
<keyword id="KW-0472">Membrane</keyword>
<keyword id="KW-0602">Photosynthesis</keyword>
<keyword id="KW-0604">Photosystem II</keyword>
<keyword id="KW-0934">Plastid</keyword>
<keyword id="KW-0674">Reaction center</keyword>
<keyword id="KW-1185">Reference proteome</keyword>
<keyword id="KW-0793">Thylakoid</keyword>
<keyword id="KW-0812">Transmembrane</keyword>
<keyword id="KW-1133">Transmembrane helix</keyword>
<organism>
    <name type="scientific">Arabidopsis thaliana</name>
    <name type="common">Mouse-ear cress</name>
    <dbReference type="NCBI Taxonomy" id="3702"/>
    <lineage>
        <taxon>Eukaryota</taxon>
        <taxon>Viridiplantae</taxon>
        <taxon>Streptophyta</taxon>
        <taxon>Embryophyta</taxon>
        <taxon>Tracheophyta</taxon>
        <taxon>Spermatophyta</taxon>
        <taxon>Magnoliopsida</taxon>
        <taxon>eudicotyledons</taxon>
        <taxon>Gunneridae</taxon>
        <taxon>Pentapetalae</taxon>
        <taxon>rosids</taxon>
        <taxon>malvids</taxon>
        <taxon>Brassicales</taxon>
        <taxon>Brassicaceae</taxon>
        <taxon>Camelineae</taxon>
        <taxon>Arabidopsis</taxon>
    </lineage>
</organism>
<geneLocation type="chloroplast"/>
<accession>P56781</accession>
<accession>Q42427</accession>
<protein>
    <recommendedName>
        <fullName evidence="1">Photosystem II reaction center protein J</fullName>
        <shortName evidence="1">PSII-J</shortName>
    </recommendedName>
</protein>
<gene>
    <name evidence="1" type="primary">psbJ</name>
    <name type="ordered locus">AtCg00550</name>
</gene>
<evidence type="ECO:0000255" key="1">
    <source>
        <dbReference type="HAMAP-Rule" id="MF_01305"/>
    </source>
</evidence>
<reference key="1">
    <citation type="journal article" date="1999" name="DNA Res.">
        <title>Complete structure of the chloroplast genome of Arabidopsis thaliana.</title>
        <authorList>
            <person name="Sato S."/>
            <person name="Nakamura Y."/>
            <person name="Kaneko T."/>
            <person name="Asamizu E."/>
            <person name="Tabata S."/>
        </authorList>
    </citation>
    <scope>NUCLEOTIDE SEQUENCE [LARGE SCALE GENOMIC DNA]</scope>
    <source>
        <strain>cv. Columbia</strain>
    </source>
</reference>
<reference key="2">
    <citation type="journal article" date="1996" name="Plant J.">
        <title>Further progress towards a catalogue of all Arabidopsis genes: analysis of a set of 5000 non-redundant ESTs.</title>
        <authorList>
            <person name="Cooke R."/>
            <person name="Raynal M."/>
            <person name="Laudie M."/>
            <person name="Grellet F."/>
            <person name="Delseny M."/>
            <person name="Morris P.-C."/>
            <person name="Guerrier D."/>
            <person name="Giraudat J."/>
            <person name="Quigley F."/>
            <person name="Clabault G."/>
            <person name="Li Y.-F."/>
            <person name="Mache R."/>
            <person name="Krivitzky M."/>
            <person name="Gy I.J.-J."/>
            <person name="Kreis M."/>
            <person name="Lecharny A."/>
            <person name="Parmentier Y."/>
            <person name="Marbach J."/>
            <person name="Fleck J."/>
            <person name="Clement B."/>
            <person name="Philipps G."/>
            <person name="Herve C."/>
            <person name="Bardet C."/>
            <person name="Tremousaygue D."/>
            <person name="Lescure B."/>
            <person name="Lacomme C."/>
            <person name="Roby D."/>
            <person name="Jourjon M.-F."/>
            <person name="Chabrier P."/>
            <person name="Charpenteau J.-L."/>
            <person name="Desprez T."/>
            <person name="Amselem J."/>
            <person name="Chiapello H."/>
            <person name="Hoefte H."/>
        </authorList>
    </citation>
    <scope>NUCLEOTIDE SEQUENCE [LARGE SCALE MRNA]</scope>
    <source>
        <strain>cv. Columbia</strain>
        <tissue>Leaf</tissue>
    </source>
</reference>
<proteinExistence type="inferred from homology"/>
<comment type="function">
    <text evidence="1">One of the components of the core complex of photosystem II (PSII). PSII is a light-driven water:plastoquinone oxidoreductase that uses light energy to abstract electrons from H(2)O, generating O(2) and a proton gradient subsequently used for ATP formation. It consists of a core antenna complex that captures photons, and an electron transfer chain that converts photonic excitation into a charge separation.</text>
</comment>
<comment type="subunit">
    <text evidence="1">PSII is composed of 1 copy each of membrane proteins PsbA, PsbB, PsbC, PsbD, PsbE, PsbF, PsbH, PsbI, PsbJ, PsbK, PsbL, PsbM, PsbT, PsbX, PsbY, PsbZ, Psb30/Ycf12, at least 3 peripheral proteins of the oxygen-evolving complex and a large number of cofactors. It forms dimeric complexes.</text>
</comment>
<comment type="subcellular location">
    <subcellularLocation>
        <location evidence="1">Plastid</location>
        <location evidence="1">Chloroplast thylakoid membrane</location>
        <topology evidence="1">Single-pass membrane protein</topology>
    </subcellularLocation>
</comment>
<comment type="similarity">
    <text evidence="1">Belongs to the PsbJ family.</text>
</comment>
<feature type="chain" id="PRO_0000216579" description="Photosystem II reaction center protein J">
    <location>
        <begin position="1"/>
        <end position="40"/>
    </location>
</feature>
<feature type="transmembrane region" description="Helical" evidence="1">
    <location>
        <begin position="8"/>
        <end position="28"/>
    </location>
</feature>